<gene>
    <name evidence="1" type="primary">top6A</name>
    <name type="ordered locus">OE_2301R</name>
</gene>
<feature type="chain" id="PRO_1000095768" description="Type 2 DNA topoisomerase 6 subunit A">
    <location>
        <begin position="1"/>
        <end position="366"/>
    </location>
</feature>
<feature type="domain" description="Topo IIA-type catalytic" evidence="2">
    <location>
        <begin position="7"/>
        <end position="146"/>
    </location>
</feature>
<feature type="active site" description="O-(5'-phospho-DNA)-tyrosine intermediate" evidence="2">
    <location>
        <position position="101"/>
    </location>
</feature>
<feature type="binding site" evidence="1">
    <location>
        <position position="199"/>
    </location>
    <ligand>
        <name>Mg(2+)</name>
        <dbReference type="ChEBI" id="CHEBI:18420"/>
    </ligand>
</feature>
<feature type="binding site" evidence="1">
    <location>
        <position position="251"/>
    </location>
    <ligand>
        <name>Mg(2+)</name>
        <dbReference type="ChEBI" id="CHEBI:18420"/>
    </ligand>
</feature>
<evidence type="ECO:0000255" key="1">
    <source>
        <dbReference type="HAMAP-Rule" id="MF_00132"/>
    </source>
</evidence>
<evidence type="ECO:0000255" key="2">
    <source>
        <dbReference type="PROSITE-ProRule" id="PRU01385"/>
    </source>
</evidence>
<proteinExistence type="inferred from homology"/>
<accession>B0R4D2</accession>
<sequence>MSETHTSDETEARDQLLAIAEQFYDQFADGDIPRMSLPTRSKSNIEYDEDADVWVYGDSQSTRSANSVRGARKLLKSVYTVDFLAQQLDEGRSSTLRELYYLSESWDEAEAQFNDQSESDKLVEDLEIVSGVKREDFHMRPEESGAKVMGPLRLREQTRRGDREIHCQEDVGQGGYQIPNNPDTIDFLDTDADFVLCVETGGMRDRLVENGFDDDYNAIVVHLGGQPARATRRLTKRLHDELDLPVTVFTDGDPWSYRIYGSVAYGSIKSAHLSEYLATPQAQFIGIRPQDIVDYDLPTDPLSDSDVNALESELEDPRFQSDFWTEQIGLQLDIDKKAEQQALASRGLDFVTDTYLPERLAEMGVL</sequence>
<reference key="1">
    <citation type="journal article" date="2008" name="Genomics">
        <title>Evolution in the laboratory: the genome of Halobacterium salinarum strain R1 compared to that of strain NRC-1.</title>
        <authorList>
            <person name="Pfeiffer F."/>
            <person name="Schuster S.C."/>
            <person name="Broicher A."/>
            <person name="Falb M."/>
            <person name="Palm P."/>
            <person name="Rodewald K."/>
            <person name="Ruepp A."/>
            <person name="Soppa J."/>
            <person name="Tittor J."/>
            <person name="Oesterhelt D."/>
        </authorList>
    </citation>
    <scope>NUCLEOTIDE SEQUENCE [LARGE SCALE GENOMIC DNA]</scope>
    <source>
        <strain>ATCC 29341 / DSM 671 / R1</strain>
    </source>
</reference>
<name>TOP6A_HALS3</name>
<protein>
    <recommendedName>
        <fullName evidence="1">Type 2 DNA topoisomerase 6 subunit A</fullName>
        <ecNumber evidence="1">5.6.2.2</ecNumber>
    </recommendedName>
    <alternativeName>
        <fullName evidence="1">Type II DNA topoisomerase VI subunit A</fullName>
    </alternativeName>
</protein>
<dbReference type="EC" id="5.6.2.2" evidence="1"/>
<dbReference type="EMBL" id="AM774415">
    <property type="protein sequence ID" value="CAP13597.1"/>
    <property type="molecule type" value="Genomic_DNA"/>
</dbReference>
<dbReference type="RefSeq" id="WP_010902622.1">
    <property type="nucleotide sequence ID" value="NC_010364.1"/>
</dbReference>
<dbReference type="SMR" id="B0R4D2"/>
<dbReference type="EnsemblBacteria" id="CAP13597">
    <property type="protein sequence ID" value="CAP13597"/>
    <property type="gene ID" value="OE_2301R"/>
</dbReference>
<dbReference type="KEGG" id="hsl:OE_2301R"/>
<dbReference type="HOGENOM" id="CLU_037229_1_0_2"/>
<dbReference type="PhylomeDB" id="B0R4D2"/>
<dbReference type="Proteomes" id="UP000001321">
    <property type="component" value="Chromosome"/>
</dbReference>
<dbReference type="GO" id="GO:0005694">
    <property type="term" value="C:chromosome"/>
    <property type="evidence" value="ECO:0007669"/>
    <property type="project" value="InterPro"/>
</dbReference>
<dbReference type="GO" id="GO:0005524">
    <property type="term" value="F:ATP binding"/>
    <property type="evidence" value="ECO:0007669"/>
    <property type="project" value="UniProtKB-KW"/>
</dbReference>
<dbReference type="GO" id="GO:0003677">
    <property type="term" value="F:DNA binding"/>
    <property type="evidence" value="ECO:0007669"/>
    <property type="project" value="UniProtKB-UniRule"/>
</dbReference>
<dbReference type="GO" id="GO:0003918">
    <property type="term" value="F:DNA topoisomerase type II (double strand cut, ATP-hydrolyzing) activity"/>
    <property type="evidence" value="ECO:0007669"/>
    <property type="project" value="UniProtKB-UniRule"/>
</dbReference>
<dbReference type="GO" id="GO:0000287">
    <property type="term" value="F:magnesium ion binding"/>
    <property type="evidence" value="ECO:0007669"/>
    <property type="project" value="UniProtKB-UniRule"/>
</dbReference>
<dbReference type="GO" id="GO:0006265">
    <property type="term" value="P:DNA topological change"/>
    <property type="evidence" value="ECO:0007669"/>
    <property type="project" value="UniProtKB-UniRule"/>
</dbReference>
<dbReference type="CDD" id="cd00223">
    <property type="entry name" value="TOPRIM_TopoIIB_SPO"/>
    <property type="match status" value="1"/>
</dbReference>
<dbReference type="FunFam" id="1.10.10.10:FF:000655">
    <property type="entry name" value="Type 2 DNA topoisomerase 6 subunit A"/>
    <property type="match status" value="1"/>
</dbReference>
<dbReference type="FunFam" id="3.40.1360.10:FF:000011">
    <property type="entry name" value="Type 2 DNA topoisomerase 6 subunit A"/>
    <property type="match status" value="1"/>
</dbReference>
<dbReference type="Gene3D" id="3.40.1360.10">
    <property type="match status" value="1"/>
</dbReference>
<dbReference type="Gene3D" id="1.10.10.10">
    <property type="entry name" value="Winged helix-like DNA-binding domain superfamily/Winged helix DNA-binding domain"/>
    <property type="match status" value="1"/>
</dbReference>
<dbReference type="HAMAP" id="MF_00132">
    <property type="entry name" value="Top6A"/>
    <property type="match status" value="1"/>
</dbReference>
<dbReference type="InterPro" id="IPR002815">
    <property type="entry name" value="Spo11/TopoVI_A"/>
</dbReference>
<dbReference type="InterPro" id="IPR013049">
    <property type="entry name" value="Spo11/TopoVI_A_N"/>
</dbReference>
<dbReference type="InterPro" id="IPR036078">
    <property type="entry name" value="Spo11/TopoVI_A_sf"/>
</dbReference>
<dbReference type="InterPro" id="IPR049333">
    <property type="entry name" value="Topo_VI_alpha"/>
</dbReference>
<dbReference type="InterPro" id="IPR004085">
    <property type="entry name" value="TopoVI_A"/>
</dbReference>
<dbReference type="InterPro" id="IPR034136">
    <property type="entry name" value="TOPRIM_Topo6A/Spo11"/>
</dbReference>
<dbReference type="InterPro" id="IPR036388">
    <property type="entry name" value="WH-like_DNA-bd_sf"/>
</dbReference>
<dbReference type="NCBIfam" id="NF003332">
    <property type="entry name" value="PRK04342.1-1"/>
    <property type="match status" value="1"/>
</dbReference>
<dbReference type="PANTHER" id="PTHR10848">
    <property type="entry name" value="MEIOTIC RECOMBINATION PROTEIN SPO11"/>
    <property type="match status" value="1"/>
</dbReference>
<dbReference type="PANTHER" id="PTHR10848:SF0">
    <property type="entry name" value="MEIOTIC RECOMBINATION PROTEIN SPO11"/>
    <property type="match status" value="1"/>
</dbReference>
<dbReference type="Pfam" id="PF21180">
    <property type="entry name" value="TOP6A-Spo11_Toprim"/>
    <property type="match status" value="1"/>
</dbReference>
<dbReference type="Pfam" id="PF20768">
    <property type="entry name" value="Topo_VI_alpha"/>
    <property type="match status" value="1"/>
</dbReference>
<dbReference type="Pfam" id="PF04406">
    <property type="entry name" value="TP6A_N"/>
    <property type="match status" value="1"/>
</dbReference>
<dbReference type="PRINTS" id="PR01550">
    <property type="entry name" value="TOP6AFAMILY"/>
</dbReference>
<dbReference type="PRINTS" id="PR01552">
    <property type="entry name" value="TPISMRASE6A"/>
</dbReference>
<dbReference type="SUPFAM" id="SSF56726">
    <property type="entry name" value="DNA topoisomerase IV, alpha subunit"/>
    <property type="match status" value="1"/>
</dbReference>
<dbReference type="PROSITE" id="PS52041">
    <property type="entry name" value="TOPO_IIB"/>
    <property type="match status" value="1"/>
</dbReference>
<comment type="function">
    <text evidence="1">Relaxes both positive and negative superturns and exhibits a strong decatenase activity.</text>
</comment>
<comment type="catalytic activity">
    <reaction evidence="1">
        <text>ATP-dependent breakage, passage and rejoining of double-stranded DNA.</text>
        <dbReference type="EC" id="5.6.2.2"/>
    </reaction>
</comment>
<comment type="cofactor">
    <cofactor evidence="1">
        <name>Mg(2+)</name>
        <dbReference type="ChEBI" id="CHEBI:18420"/>
    </cofactor>
</comment>
<comment type="subunit">
    <text evidence="1">Homodimer. Heterotetramer of two Top6A and two Top6B chains.</text>
</comment>
<comment type="similarity">
    <text evidence="1">Belongs to the TOP6A family.</text>
</comment>
<organism>
    <name type="scientific">Halobacterium salinarum (strain ATCC 29341 / DSM 671 / R1)</name>
    <dbReference type="NCBI Taxonomy" id="478009"/>
    <lineage>
        <taxon>Archaea</taxon>
        <taxon>Methanobacteriati</taxon>
        <taxon>Methanobacteriota</taxon>
        <taxon>Stenosarchaea group</taxon>
        <taxon>Halobacteria</taxon>
        <taxon>Halobacteriales</taxon>
        <taxon>Halobacteriaceae</taxon>
        <taxon>Halobacterium</taxon>
        <taxon>Halobacterium salinarum NRC-34001</taxon>
    </lineage>
</organism>
<keyword id="KW-0067">ATP-binding</keyword>
<keyword id="KW-0238">DNA-binding</keyword>
<keyword id="KW-0413">Isomerase</keyword>
<keyword id="KW-0460">Magnesium</keyword>
<keyword id="KW-0479">Metal-binding</keyword>
<keyword id="KW-0547">Nucleotide-binding</keyword>
<keyword id="KW-0799">Topoisomerase</keyword>